<dbReference type="EMBL" id="CM003148">
    <property type="protein sequence ID" value="KIS68392.1"/>
    <property type="molecule type" value="Genomic_DNA"/>
</dbReference>
<dbReference type="RefSeq" id="XP_011389939.1">
    <property type="nucleotide sequence ID" value="XM_011391637.1"/>
</dbReference>
<dbReference type="SMR" id="Q4P8S7"/>
<dbReference type="STRING" id="237631.Q4P8S7"/>
<dbReference type="EnsemblFungi" id="KIS68392">
    <property type="protein sequence ID" value="KIS68392"/>
    <property type="gene ID" value="UMAG_03486"/>
</dbReference>
<dbReference type="GeneID" id="23563926"/>
<dbReference type="KEGG" id="uma:UMAG_03486"/>
<dbReference type="VEuPathDB" id="FungiDB:UMAG_03486"/>
<dbReference type="eggNOG" id="KOG3022">
    <property type="taxonomic scope" value="Eukaryota"/>
</dbReference>
<dbReference type="HOGENOM" id="CLU_024839_0_1_1"/>
<dbReference type="InParanoid" id="Q4P8S7"/>
<dbReference type="OMA" id="DCTNVWG"/>
<dbReference type="OrthoDB" id="1741334at2759"/>
<dbReference type="Proteomes" id="UP000000561">
    <property type="component" value="Chromosome 9"/>
</dbReference>
<dbReference type="GO" id="GO:0005829">
    <property type="term" value="C:cytosol"/>
    <property type="evidence" value="ECO:0000318"/>
    <property type="project" value="GO_Central"/>
</dbReference>
<dbReference type="GO" id="GO:1904564">
    <property type="term" value="C:cytosolic [4Fe-4S] assembly scaffold complex"/>
    <property type="evidence" value="ECO:0007669"/>
    <property type="project" value="EnsemblFungi"/>
</dbReference>
<dbReference type="GO" id="GO:0051539">
    <property type="term" value="F:4 iron, 4 sulfur cluster binding"/>
    <property type="evidence" value="ECO:0007669"/>
    <property type="project" value="UniProtKB-UniRule"/>
</dbReference>
<dbReference type="GO" id="GO:0005524">
    <property type="term" value="F:ATP binding"/>
    <property type="evidence" value="ECO:0007669"/>
    <property type="project" value="UniProtKB-KW"/>
</dbReference>
<dbReference type="GO" id="GO:0016887">
    <property type="term" value="F:ATP hydrolysis activity"/>
    <property type="evidence" value="ECO:0007669"/>
    <property type="project" value="EnsemblFungi"/>
</dbReference>
<dbReference type="GO" id="GO:0140663">
    <property type="term" value="F:ATP-dependent FeS chaperone activity"/>
    <property type="evidence" value="ECO:0007669"/>
    <property type="project" value="InterPro"/>
</dbReference>
<dbReference type="GO" id="GO:0051536">
    <property type="term" value="F:iron-sulfur cluster binding"/>
    <property type="evidence" value="ECO:0000318"/>
    <property type="project" value="GO_Central"/>
</dbReference>
<dbReference type="GO" id="GO:0046872">
    <property type="term" value="F:metal ion binding"/>
    <property type="evidence" value="ECO:0007669"/>
    <property type="project" value="UniProtKB-KW"/>
</dbReference>
<dbReference type="GO" id="GO:0016226">
    <property type="term" value="P:iron-sulfur cluster assembly"/>
    <property type="evidence" value="ECO:0000318"/>
    <property type="project" value="GO_Central"/>
</dbReference>
<dbReference type="GO" id="GO:0002098">
    <property type="term" value="P:tRNA wobble uridine modification"/>
    <property type="evidence" value="ECO:0007669"/>
    <property type="project" value="EnsemblFungi"/>
</dbReference>
<dbReference type="CDD" id="cd02037">
    <property type="entry name" value="Mrp_NBP35"/>
    <property type="match status" value="1"/>
</dbReference>
<dbReference type="FunFam" id="3.40.50.300:FF:002132">
    <property type="entry name" value="Cytosolic Fe-S cluster assembly factor CFD1"/>
    <property type="match status" value="1"/>
</dbReference>
<dbReference type="Gene3D" id="3.40.50.300">
    <property type="entry name" value="P-loop containing nucleotide triphosphate hydrolases"/>
    <property type="match status" value="1"/>
</dbReference>
<dbReference type="HAMAP" id="MF_02040">
    <property type="entry name" value="Mrp_NBP35"/>
    <property type="match status" value="1"/>
</dbReference>
<dbReference type="HAMAP" id="MF_03039">
    <property type="entry name" value="NUBP2"/>
    <property type="match status" value="1"/>
</dbReference>
<dbReference type="InterPro" id="IPR000808">
    <property type="entry name" value="Mrp-like_CS"/>
</dbReference>
<dbReference type="InterPro" id="IPR019591">
    <property type="entry name" value="Mrp/NBP35_ATP-bd"/>
</dbReference>
<dbReference type="InterPro" id="IPR028600">
    <property type="entry name" value="NUBP2/Cfd1_eukaryotes"/>
</dbReference>
<dbReference type="InterPro" id="IPR027417">
    <property type="entry name" value="P-loop_NTPase"/>
</dbReference>
<dbReference type="InterPro" id="IPR033756">
    <property type="entry name" value="YlxH/NBP35"/>
</dbReference>
<dbReference type="PANTHER" id="PTHR23264:SF19">
    <property type="entry name" value="CYTOSOLIC FE-S CLUSTER ASSEMBLY FACTOR NUBP2"/>
    <property type="match status" value="1"/>
</dbReference>
<dbReference type="PANTHER" id="PTHR23264">
    <property type="entry name" value="NUCLEOTIDE-BINDING PROTEIN NBP35 YEAST -RELATED"/>
    <property type="match status" value="1"/>
</dbReference>
<dbReference type="Pfam" id="PF10609">
    <property type="entry name" value="ParA"/>
    <property type="match status" value="1"/>
</dbReference>
<dbReference type="SUPFAM" id="SSF52540">
    <property type="entry name" value="P-loop containing nucleoside triphosphate hydrolases"/>
    <property type="match status" value="1"/>
</dbReference>
<dbReference type="PROSITE" id="PS01215">
    <property type="entry name" value="MRP"/>
    <property type="match status" value="1"/>
</dbReference>
<reference key="1">
    <citation type="journal article" date="2006" name="Nature">
        <title>Insights from the genome of the biotrophic fungal plant pathogen Ustilago maydis.</title>
        <authorList>
            <person name="Kaemper J."/>
            <person name="Kahmann R."/>
            <person name="Boelker M."/>
            <person name="Ma L.-J."/>
            <person name="Brefort T."/>
            <person name="Saville B.J."/>
            <person name="Banuett F."/>
            <person name="Kronstad J.W."/>
            <person name="Gold S.E."/>
            <person name="Mueller O."/>
            <person name="Perlin M.H."/>
            <person name="Woesten H.A.B."/>
            <person name="de Vries R."/>
            <person name="Ruiz-Herrera J."/>
            <person name="Reynaga-Pena C.G."/>
            <person name="Snetselaar K."/>
            <person name="McCann M."/>
            <person name="Perez-Martin J."/>
            <person name="Feldbruegge M."/>
            <person name="Basse C.W."/>
            <person name="Steinberg G."/>
            <person name="Ibeas J.I."/>
            <person name="Holloman W."/>
            <person name="Guzman P."/>
            <person name="Farman M.L."/>
            <person name="Stajich J.E."/>
            <person name="Sentandreu R."/>
            <person name="Gonzalez-Prieto J.M."/>
            <person name="Kennell J.C."/>
            <person name="Molina L."/>
            <person name="Schirawski J."/>
            <person name="Mendoza-Mendoza A."/>
            <person name="Greilinger D."/>
            <person name="Muench K."/>
            <person name="Roessel N."/>
            <person name="Scherer M."/>
            <person name="Vranes M."/>
            <person name="Ladendorf O."/>
            <person name="Vincon V."/>
            <person name="Fuchs U."/>
            <person name="Sandrock B."/>
            <person name="Meng S."/>
            <person name="Ho E.C.H."/>
            <person name="Cahill M.J."/>
            <person name="Boyce K.J."/>
            <person name="Klose J."/>
            <person name="Klosterman S.J."/>
            <person name="Deelstra H.J."/>
            <person name="Ortiz-Castellanos L."/>
            <person name="Li W."/>
            <person name="Sanchez-Alonso P."/>
            <person name="Schreier P.H."/>
            <person name="Haeuser-Hahn I."/>
            <person name="Vaupel M."/>
            <person name="Koopmann E."/>
            <person name="Friedrich G."/>
            <person name="Voss H."/>
            <person name="Schlueter T."/>
            <person name="Margolis J."/>
            <person name="Platt D."/>
            <person name="Swimmer C."/>
            <person name="Gnirke A."/>
            <person name="Chen F."/>
            <person name="Vysotskaia V."/>
            <person name="Mannhaupt G."/>
            <person name="Gueldener U."/>
            <person name="Muensterkoetter M."/>
            <person name="Haase D."/>
            <person name="Oesterheld M."/>
            <person name="Mewes H.-W."/>
            <person name="Mauceli E.W."/>
            <person name="DeCaprio D."/>
            <person name="Wade C.M."/>
            <person name="Butler J."/>
            <person name="Young S.K."/>
            <person name="Jaffe D.B."/>
            <person name="Calvo S.E."/>
            <person name="Nusbaum C."/>
            <person name="Galagan J.E."/>
            <person name="Birren B.W."/>
        </authorList>
    </citation>
    <scope>NUCLEOTIDE SEQUENCE [LARGE SCALE GENOMIC DNA]</scope>
    <source>
        <strain>DSM 14603 / FGSC 9021 / UM521</strain>
    </source>
</reference>
<reference key="2">
    <citation type="submission" date="2014-09" db="EMBL/GenBank/DDBJ databases">
        <authorList>
            <person name="Gueldener U."/>
            <person name="Muensterkoetter M."/>
            <person name="Walter M.C."/>
            <person name="Mannhaupt G."/>
            <person name="Kahmann R."/>
        </authorList>
    </citation>
    <scope>GENOME REANNOTATION</scope>
    <source>
        <strain>DSM 14603 / FGSC 9021 / UM521</strain>
    </source>
</reference>
<gene>
    <name evidence="1" type="primary">CFD1</name>
    <name type="ORF">UMAG_03486</name>
</gene>
<sequence length="361" mass="38766">MSASSSAISPSASHLGADPKIVRRLSSVSHIILVLSGKGGVGKSSVSAQLALSLSSSASPSDRSRMARVGILDIDLTGPSIPRMLGLGGASVKQSTDGWVPVYTDASQHLAVMSVGFLLRSKNDSVVWRGPKKNAMIKQFLGDVRWGTLDYLIIDTPPGTSDEHISILEYLRTFEPAAVMVTTPQAVSLADNLRSLDFCRKTSLPVLGLIENMSGYICPHCNDCTNVWGKGGGEALAKREGLRFLGRIPIDPGLVRVLDDAKDDAHVELQKQLHQTSLNDNVLKAIDQPLTPHSQSAAAQLPNSGDTESLTPAGTMLSRTTIQRYKNSLTFPIFQEITDQIRDLATKHKLHPQSSVLTTAL</sequence>
<protein>
    <recommendedName>
        <fullName evidence="1">Cytosolic Fe-S cluster assembly factor CFD1</fullName>
    </recommendedName>
    <alternativeName>
        <fullName evidence="1">Cytosolic Fe-S cluster-deficient protein 1</fullName>
    </alternativeName>
</protein>
<name>CFD1_MYCMD</name>
<proteinExistence type="inferred from homology"/>
<evidence type="ECO:0000255" key="1">
    <source>
        <dbReference type="HAMAP-Rule" id="MF_03039"/>
    </source>
</evidence>
<evidence type="ECO:0000256" key="2">
    <source>
        <dbReference type="SAM" id="MobiDB-lite"/>
    </source>
</evidence>
<keyword id="KW-0004">4Fe-4S</keyword>
<keyword id="KW-0067">ATP-binding</keyword>
<keyword id="KW-0963">Cytoplasm</keyword>
<keyword id="KW-0408">Iron</keyword>
<keyword id="KW-0411">Iron-sulfur</keyword>
<keyword id="KW-0479">Metal-binding</keyword>
<keyword id="KW-0547">Nucleotide-binding</keyword>
<keyword id="KW-1185">Reference proteome</keyword>
<organism>
    <name type="scientific">Mycosarcoma maydis</name>
    <name type="common">Corn smut fungus</name>
    <name type="synonym">Ustilago maydis</name>
    <dbReference type="NCBI Taxonomy" id="5270"/>
    <lineage>
        <taxon>Eukaryota</taxon>
        <taxon>Fungi</taxon>
        <taxon>Dikarya</taxon>
        <taxon>Basidiomycota</taxon>
        <taxon>Ustilaginomycotina</taxon>
        <taxon>Ustilaginomycetes</taxon>
        <taxon>Ustilaginales</taxon>
        <taxon>Ustilaginaceae</taxon>
        <taxon>Mycosarcoma</taxon>
    </lineage>
</organism>
<feature type="chain" id="PRO_0000278884" description="Cytosolic Fe-S cluster assembly factor CFD1">
    <location>
        <begin position="1"/>
        <end position="361"/>
    </location>
</feature>
<feature type="region of interest" description="Disordered" evidence="2">
    <location>
        <begin position="293"/>
        <end position="314"/>
    </location>
</feature>
<feature type="binding site" evidence="1">
    <location>
        <begin position="37"/>
        <end position="44"/>
    </location>
    <ligand>
        <name>ATP</name>
        <dbReference type="ChEBI" id="CHEBI:30616"/>
    </ligand>
</feature>
<feature type="binding site" evidence="1">
    <location>
        <position position="218"/>
    </location>
    <ligand>
        <name>[4Fe-4S] cluster</name>
        <dbReference type="ChEBI" id="CHEBI:49883"/>
        <note>ligand shared between dimeric partners</note>
    </ligand>
</feature>
<feature type="binding site" evidence="1">
    <location>
        <position position="221"/>
    </location>
    <ligand>
        <name>[4Fe-4S] cluster</name>
        <dbReference type="ChEBI" id="CHEBI:49883"/>
        <note>ligand shared between dimeric partners</note>
    </ligand>
</feature>
<comment type="function">
    <text evidence="1">Component of the cytosolic iron-sulfur (Fe/S) protein assembly (CIA) machinery. Required for maturation of extramitochondrial Fe-S proteins. The NBP35-CFD1 heterotetramer forms a Fe-S scaffold complex, mediating the de novo assembly of an Fe-S cluster and its transfer to target apoproteins.</text>
</comment>
<comment type="cofactor">
    <cofactor evidence="1">
        <name>[4Fe-4S] cluster</name>
        <dbReference type="ChEBI" id="CHEBI:49883"/>
    </cofactor>
    <text evidence="1">Binds 4 [4Fe-4S] clusters per heterotetramer. Contains two stable clusters in the N-termini of NBP35 and two labile, bridging clusters between subunits of the NBP35-CFD1 heterotetramer.</text>
</comment>
<comment type="subunit">
    <text evidence="1">Heterotetramer of 2 NBP35 and 2 CFD1 chains.</text>
</comment>
<comment type="subcellular location">
    <subcellularLocation>
        <location evidence="1">Cytoplasm</location>
    </subcellularLocation>
</comment>
<comment type="similarity">
    <text evidence="1">Belongs to the Mrp/NBP35 ATP-binding proteins family. NUBP2/CFD1 subfamily.</text>
</comment>
<accession>Q4P8S7</accession>
<accession>A0A0D1C3V4</accession>